<sequence>MSVFKGEVTSLPPDKSISHRAALIASLSDGETEIMNFSAGFDNQSTLGVLQACGIPVRQEEVPGPWGTAILRVVIKSKGLWSLTPPSAPLQCNNSGSTMRMFSGILAGQPFQSELVGDASLLKRPMRRIADPLIQMGAGVSLSPIGTAPVVITGSKDLHAIDYRLPVASAQVKSLVAFAGLHAEGETRIYEPLSSRNHTELMLGLEPRVENEERVIVVPGRRQREARPFQIPADPSAACFIVSLGLLARGSEIMIRDVCLNPTRAAFLDILIRAGAAVTIENRRTVGGESIGDILVEGTRDMEPLVISDPQEVAIAIDELPMLGVLSAFATERFELMNAGELRTKESDRIEALALNLERLGFVCHQEPGGLSVTGRKGRPSGPVVVECFDDHRIAMSFAVASKACGEDIELSDREVAGVSFPNFFSLLDALEV</sequence>
<gene>
    <name evidence="1" type="primary">aroA</name>
    <name type="ordered locus">Plut_0284</name>
</gene>
<keyword id="KW-0028">Amino-acid biosynthesis</keyword>
<keyword id="KW-0057">Aromatic amino acid biosynthesis</keyword>
<keyword id="KW-0963">Cytoplasm</keyword>
<keyword id="KW-1185">Reference proteome</keyword>
<keyword id="KW-0808">Transferase</keyword>
<name>AROA_CHLL3</name>
<comment type="function">
    <text evidence="1">Catalyzes the transfer of the enolpyruvyl moiety of phosphoenolpyruvate (PEP) to the 5-hydroxyl of shikimate-3-phosphate (S3P) to produce enolpyruvyl shikimate-3-phosphate and inorganic phosphate.</text>
</comment>
<comment type="catalytic activity">
    <reaction evidence="1">
        <text>3-phosphoshikimate + phosphoenolpyruvate = 5-O-(1-carboxyvinyl)-3-phosphoshikimate + phosphate</text>
        <dbReference type="Rhea" id="RHEA:21256"/>
        <dbReference type="ChEBI" id="CHEBI:43474"/>
        <dbReference type="ChEBI" id="CHEBI:57701"/>
        <dbReference type="ChEBI" id="CHEBI:58702"/>
        <dbReference type="ChEBI" id="CHEBI:145989"/>
        <dbReference type="EC" id="2.5.1.19"/>
    </reaction>
    <physiologicalReaction direction="left-to-right" evidence="1">
        <dbReference type="Rhea" id="RHEA:21257"/>
    </physiologicalReaction>
</comment>
<comment type="pathway">
    <text evidence="1">Metabolic intermediate biosynthesis; chorismate biosynthesis; chorismate from D-erythrose 4-phosphate and phosphoenolpyruvate: step 6/7.</text>
</comment>
<comment type="subunit">
    <text evidence="1">Monomer.</text>
</comment>
<comment type="subcellular location">
    <subcellularLocation>
        <location evidence="1">Cytoplasm</location>
    </subcellularLocation>
</comment>
<comment type="similarity">
    <text evidence="1">Belongs to the EPSP synthase family.</text>
</comment>
<organism>
    <name type="scientific">Chlorobium luteolum (strain DSM 273 / BCRC 81028 / 2530)</name>
    <name type="common">Pelodictyon luteolum</name>
    <dbReference type="NCBI Taxonomy" id="319225"/>
    <lineage>
        <taxon>Bacteria</taxon>
        <taxon>Pseudomonadati</taxon>
        <taxon>Chlorobiota</taxon>
        <taxon>Chlorobiia</taxon>
        <taxon>Chlorobiales</taxon>
        <taxon>Chlorobiaceae</taxon>
        <taxon>Chlorobium/Pelodictyon group</taxon>
        <taxon>Pelodictyon</taxon>
    </lineage>
</organism>
<proteinExistence type="inferred from homology"/>
<reference key="1">
    <citation type="submission" date="2005-08" db="EMBL/GenBank/DDBJ databases">
        <title>Complete sequence of Pelodictyon luteolum DSM 273.</title>
        <authorList>
            <consortium name="US DOE Joint Genome Institute"/>
            <person name="Copeland A."/>
            <person name="Lucas S."/>
            <person name="Lapidus A."/>
            <person name="Barry K."/>
            <person name="Detter J.C."/>
            <person name="Glavina T."/>
            <person name="Hammon N."/>
            <person name="Israni S."/>
            <person name="Pitluck S."/>
            <person name="Bryant D."/>
            <person name="Schmutz J."/>
            <person name="Larimer F."/>
            <person name="Land M."/>
            <person name="Kyrpides N."/>
            <person name="Ivanova N."/>
            <person name="Richardson P."/>
        </authorList>
    </citation>
    <scope>NUCLEOTIDE SEQUENCE [LARGE SCALE GENOMIC DNA]</scope>
    <source>
        <strain>DSM 273 / BCRC 81028 / 2530</strain>
    </source>
</reference>
<accession>Q3B659</accession>
<protein>
    <recommendedName>
        <fullName evidence="1">3-phosphoshikimate 1-carboxyvinyltransferase</fullName>
        <ecNumber evidence="1">2.5.1.19</ecNumber>
    </recommendedName>
    <alternativeName>
        <fullName evidence="1">5-enolpyruvylshikimate-3-phosphate synthase</fullName>
        <shortName evidence="1">EPSP synthase</shortName>
        <shortName evidence="1">EPSPS</shortName>
    </alternativeName>
</protein>
<evidence type="ECO:0000255" key="1">
    <source>
        <dbReference type="HAMAP-Rule" id="MF_00210"/>
    </source>
</evidence>
<dbReference type="EC" id="2.5.1.19" evidence="1"/>
<dbReference type="EMBL" id="CP000096">
    <property type="protein sequence ID" value="ABB23172.1"/>
    <property type="molecule type" value="Genomic_DNA"/>
</dbReference>
<dbReference type="RefSeq" id="WP_011357047.1">
    <property type="nucleotide sequence ID" value="NC_007512.1"/>
</dbReference>
<dbReference type="SMR" id="Q3B659"/>
<dbReference type="STRING" id="319225.Plut_0284"/>
<dbReference type="KEGG" id="plt:Plut_0284"/>
<dbReference type="eggNOG" id="COG0128">
    <property type="taxonomic scope" value="Bacteria"/>
</dbReference>
<dbReference type="HOGENOM" id="CLU_024321_0_1_10"/>
<dbReference type="OrthoDB" id="9809920at2"/>
<dbReference type="UniPathway" id="UPA00053">
    <property type="reaction ID" value="UER00089"/>
</dbReference>
<dbReference type="Proteomes" id="UP000002709">
    <property type="component" value="Chromosome"/>
</dbReference>
<dbReference type="GO" id="GO:0005737">
    <property type="term" value="C:cytoplasm"/>
    <property type="evidence" value="ECO:0007669"/>
    <property type="project" value="UniProtKB-SubCell"/>
</dbReference>
<dbReference type="GO" id="GO:0003866">
    <property type="term" value="F:3-phosphoshikimate 1-carboxyvinyltransferase activity"/>
    <property type="evidence" value="ECO:0007669"/>
    <property type="project" value="UniProtKB-UniRule"/>
</dbReference>
<dbReference type="GO" id="GO:0008652">
    <property type="term" value="P:amino acid biosynthetic process"/>
    <property type="evidence" value="ECO:0007669"/>
    <property type="project" value="UniProtKB-KW"/>
</dbReference>
<dbReference type="GO" id="GO:0009073">
    <property type="term" value="P:aromatic amino acid family biosynthetic process"/>
    <property type="evidence" value="ECO:0007669"/>
    <property type="project" value="UniProtKB-KW"/>
</dbReference>
<dbReference type="GO" id="GO:0009423">
    <property type="term" value="P:chorismate biosynthetic process"/>
    <property type="evidence" value="ECO:0007669"/>
    <property type="project" value="UniProtKB-UniRule"/>
</dbReference>
<dbReference type="CDD" id="cd01556">
    <property type="entry name" value="EPSP_synthase"/>
    <property type="match status" value="1"/>
</dbReference>
<dbReference type="FunFam" id="3.65.10.10:FF:000005">
    <property type="entry name" value="3-phosphoshikimate 1-carboxyvinyltransferase"/>
    <property type="match status" value="1"/>
</dbReference>
<dbReference type="Gene3D" id="3.65.10.10">
    <property type="entry name" value="Enolpyruvate transferase domain"/>
    <property type="match status" value="2"/>
</dbReference>
<dbReference type="HAMAP" id="MF_00210">
    <property type="entry name" value="EPSP_synth"/>
    <property type="match status" value="1"/>
</dbReference>
<dbReference type="InterPro" id="IPR001986">
    <property type="entry name" value="Enolpyruvate_Tfrase_dom"/>
</dbReference>
<dbReference type="InterPro" id="IPR036968">
    <property type="entry name" value="Enolpyruvate_Tfrase_sf"/>
</dbReference>
<dbReference type="InterPro" id="IPR006264">
    <property type="entry name" value="EPSP_synthase"/>
</dbReference>
<dbReference type="InterPro" id="IPR023193">
    <property type="entry name" value="EPSP_synthase_CS"/>
</dbReference>
<dbReference type="InterPro" id="IPR013792">
    <property type="entry name" value="RNA3'P_cycl/enolpyr_Trfase_a/b"/>
</dbReference>
<dbReference type="NCBIfam" id="TIGR01356">
    <property type="entry name" value="aroA"/>
    <property type="match status" value="1"/>
</dbReference>
<dbReference type="PANTHER" id="PTHR21090">
    <property type="entry name" value="AROM/DEHYDROQUINATE SYNTHASE"/>
    <property type="match status" value="1"/>
</dbReference>
<dbReference type="PANTHER" id="PTHR21090:SF5">
    <property type="entry name" value="PENTAFUNCTIONAL AROM POLYPEPTIDE"/>
    <property type="match status" value="1"/>
</dbReference>
<dbReference type="Pfam" id="PF00275">
    <property type="entry name" value="EPSP_synthase"/>
    <property type="match status" value="1"/>
</dbReference>
<dbReference type="PIRSF" id="PIRSF000505">
    <property type="entry name" value="EPSPS"/>
    <property type="match status" value="1"/>
</dbReference>
<dbReference type="SUPFAM" id="SSF55205">
    <property type="entry name" value="EPT/RTPC-like"/>
    <property type="match status" value="1"/>
</dbReference>
<dbReference type="PROSITE" id="PS00885">
    <property type="entry name" value="EPSP_SYNTHASE_2"/>
    <property type="match status" value="1"/>
</dbReference>
<feature type="chain" id="PRO_1000099736" description="3-phosphoshikimate 1-carboxyvinyltransferase">
    <location>
        <begin position="1"/>
        <end position="433"/>
    </location>
</feature>
<feature type="active site" description="Proton acceptor" evidence="1">
    <location>
        <position position="318"/>
    </location>
</feature>
<feature type="binding site" evidence="1">
    <location>
        <position position="15"/>
    </location>
    <ligand>
        <name>3-phosphoshikimate</name>
        <dbReference type="ChEBI" id="CHEBI:145989"/>
    </ligand>
</feature>
<feature type="binding site" evidence="1">
    <location>
        <position position="15"/>
    </location>
    <ligand>
        <name>phosphoenolpyruvate</name>
        <dbReference type="ChEBI" id="CHEBI:58702"/>
    </ligand>
</feature>
<feature type="binding site" evidence="1">
    <location>
        <position position="16"/>
    </location>
    <ligand>
        <name>3-phosphoshikimate</name>
        <dbReference type="ChEBI" id="CHEBI:145989"/>
    </ligand>
</feature>
<feature type="binding site" evidence="1">
    <location>
        <position position="20"/>
    </location>
    <ligand>
        <name>3-phosphoshikimate</name>
        <dbReference type="ChEBI" id="CHEBI:145989"/>
    </ligand>
</feature>
<feature type="binding site" evidence="1">
    <location>
        <position position="96"/>
    </location>
    <ligand>
        <name>phosphoenolpyruvate</name>
        <dbReference type="ChEBI" id="CHEBI:58702"/>
    </ligand>
</feature>
<feature type="binding site" evidence="1">
    <location>
        <position position="124"/>
    </location>
    <ligand>
        <name>phosphoenolpyruvate</name>
        <dbReference type="ChEBI" id="CHEBI:58702"/>
    </ligand>
</feature>
<feature type="binding site" evidence="1">
    <location>
        <position position="169"/>
    </location>
    <ligand>
        <name>3-phosphoshikimate</name>
        <dbReference type="ChEBI" id="CHEBI:145989"/>
    </ligand>
</feature>
<feature type="binding site" evidence="1">
    <location>
        <position position="171"/>
    </location>
    <ligand>
        <name>3-phosphoshikimate</name>
        <dbReference type="ChEBI" id="CHEBI:145989"/>
    </ligand>
</feature>
<feature type="binding site" evidence="1">
    <location>
        <position position="171"/>
    </location>
    <ligand>
        <name>phosphoenolpyruvate</name>
        <dbReference type="ChEBI" id="CHEBI:58702"/>
    </ligand>
</feature>
<feature type="binding site" evidence="1">
    <location>
        <position position="195"/>
    </location>
    <ligand>
        <name>3-phosphoshikimate</name>
        <dbReference type="ChEBI" id="CHEBI:145989"/>
    </ligand>
</feature>
<feature type="binding site" evidence="1">
    <location>
        <position position="318"/>
    </location>
    <ligand>
        <name>3-phosphoshikimate</name>
        <dbReference type="ChEBI" id="CHEBI:145989"/>
    </ligand>
</feature>
<feature type="binding site" evidence="1">
    <location>
        <position position="345"/>
    </location>
    <ligand>
        <name>3-phosphoshikimate</name>
        <dbReference type="ChEBI" id="CHEBI:145989"/>
    </ligand>
</feature>
<feature type="binding site" evidence="1">
    <location>
        <position position="349"/>
    </location>
    <ligand>
        <name>phosphoenolpyruvate</name>
        <dbReference type="ChEBI" id="CHEBI:58702"/>
    </ligand>
</feature>
<feature type="binding site" evidence="1">
    <location>
        <position position="393"/>
    </location>
    <ligand>
        <name>phosphoenolpyruvate</name>
        <dbReference type="ChEBI" id="CHEBI:58702"/>
    </ligand>
</feature>